<reference key="1">
    <citation type="journal article" date="2002" name="Proc. Natl. Acad. Sci. U.S.A.">
        <title>Complete genome sequence and comparative genomic analysis of an emerging human pathogen, serotype V Streptococcus agalactiae.</title>
        <authorList>
            <person name="Tettelin H."/>
            <person name="Masignani V."/>
            <person name="Cieslewicz M.J."/>
            <person name="Eisen J.A."/>
            <person name="Peterson S.N."/>
            <person name="Wessels M.R."/>
            <person name="Paulsen I.T."/>
            <person name="Nelson K.E."/>
            <person name="Margarit I."/>
            <person name="Read T.D."/>
            <person name="Madoff L.C."/>
            <person name="Wolf A.M."/>
            <person name="Beanan M.J."/>
            <person name="Brinkac L.M."/>
            <person name="Daugherty S.C."/>
            <person name="DeBoy R.T."/>
            <person name="Durkin A.S."/>
            <person name="Kolonay J.F."/>
            <person name="Madupu R."/>
            <person name="Lewis M.R."/>
            <person name="Radune D."/>
            <person name="Fedorova N.B."/>
            <person name="Scanlan D."/>
            <person name="Khouri H.M."/>
            <person name="Mulligan S."/>
            <person name="Carty H.A."/>
            <person name="Cline R.T."/>
            <person name="Van Aken S.E."/>
            <person name="Gill J."/>
            <person name="Scarselli M."/>
            <person name="Mora M."/>
            <person name="Iacobini E.T."/>
            <person name="Brettoni C."/>
            <person name="Galli G."/>
            <person name="Mariani M."/>
            <person name="Vegni F."/>
            <person name="Maione D."/>
            <person name="Rinaudo D."/>
            <person name="Rappuoli R."/>
            <person name="Telford J.L."/>
            <person name="Kasper D.L."/>
            <person name="Grandi G."/>
            <person name="Fraser C.M."/>
        </authorList>
    </citation>
    <scope>NUCLEOTIDE SEQUENCE [LARGE SCALE GENOMIC DNA]</scope>
    <source>
        <strain>ATCC BAA-611 / 2603 V/R</strain>
    </source>
</reference>
<organism>
    <name type="scientific">Streptococcus agalactiae serotype V (strain ATCC BAA-611 / 2603 V/R)</name>
    <dbReference type="NCBI Taxonomy" id="208435"/>
    <lineage>
        <taxon>Bacteria</taxon>
        <taxon>Bacillati</taxon>
        <taxon>Bacillota</taxon>
        <taxon>Bacilli</taxon>
        <taxon>Lactobacillales</taxon>
        <taxon>Streptococcaceae</taxon>
        <taxon>Streptococcus</taxon>
    </lineage>
</organism>
<proteinExistence type="inferred from homology"/>
<keyword id="KW-0408">Iron</keyword>
<keyword id="KW-0464">Manganese</keyword>
<keyword id="KW-0479">Metal-binding</keyword>
<keyword id="KW-0560">Oxidoreductase</keyword>
<keyword id="KW-1185">Reference proteome</keyword>
<dbReference type="EC" id="1.15.1.1" evidence="2"/>
<dbReference type="EMBL" id="AE009948">
    <property type="protein sequence ID" value="AAM99675.1"/>
    <property type="molecule type" value="Genomic_DNA"/>
</dbReference>
<dbReference type="RefSeq" id="NP_687803.1">
    <property type="nucleotide sequence ID" value="NC_004116.1"/>
</dbReference>
<dbReference type="RefSeq" id="WP_000974719.1">
    <property type="nucleotide sequence ID" value="NC_004116.1"/>
</dbReference>
<dbReference type="SMR" id="P0A4J4"/>
<dbReference type="STRING" id="208435.SAG0788"/>
<dbReference type="KEGG" id="sag:SAG0788"/>
<dbReference type="PATRIC" id="fig|208435.3.peg.795"/>
<dbReference type="HOGENOM" id="CLU_031625_0_1_9"/>
<dbReference type="OrthoDB" id="9803125at2"/>
<dbReference type="Proteomes" id="UP000000821">
    <property type="component" value="Chromosome"/>
</dbReference>
<dbReference type="GO" id="GO:0005737">
    <property type="term" value="C:cytoplasm"/>
    <property type="evidence" value="ECO:0007669"/>
    <property type="project" value="TreeGrafter"/>
</dbReference>
<dbReference type="GO" id="GO:0046872">
    <property type="term" value="F:metal ion binding"/>
    <property type="evidence" value="ECO:0007669"/>
    <property type="project" value="UniProtKB-KW"/>
</dbReference>
<dbReference type="GO" id="GO:0004784">
    <property type="term" value="F:superoxide dismutase activity"/>
    <property type="evidence" value="ECO:0007669"/>
    <property type="project" value="UniProtKB-EC"/>
</dbReference>
<dbReference type="FunFam" id="1.10.287.990:FF:000001">
    <property type="entry name" value="Superoxide dismutase"/>
    <property type="match status" value="1"/>
</dbReference>
<dbReference type="FunFam" id="3.55.40.20:FF:000001">
    <property type="entry name" value="Superoxide dismutase"/>
    <property type="match status" value="1"/>
</dbReference>
<dbReference type="Gene3D" id="1.10.287.990">
    <property type="entry name" value="Fe,Mn superoxide dismutase (SOD) domain"/>
    <property type="match status" value="1"/>
</dbReference>
<dbReference type="Gene3D" id="3.55.40.20">
    <property type="entry name" value="Iron/manganese superoxide dismutase, C-terminal domain"/>
    <property type="match status" value="1"/>
</dbReference>
<dbReference type="InterPro" id="IPR001189">
    <property type="entry name" value="Mn/Fe_SOD"/>
</dbReference>
<dbReference type="InterPro" id="IPR019833">
    <property type="entry name" value="Mn/Fe_SOD_BS"/>
</dbReference>
<dbReference type="InterPro" id="IPR019832">
    <property type="entry name" value="Mn/Fe_SOD_C"/>
</dbReference>
<dbReference type="InterPro" id="IPR019831">
    <property type="entry name" value="Mn/Fe_SOD_N"/>
</dbReference>
<dbReference type="InterPro" id="IPR036324">
    <property type="entry name" value="Mn/Fe_SOD_N_sf"/>
</dbReference>
<dbReference type="InterPro" id="IPR036314">
    <property type="entry name" value="SOD_C_sf"/>
</dbReference>
<dbReference type="PANTHER" id="PTHR43595">
    <property type="entry name" value="37S RIBOSOMAL PROTEIN S26, MITOCHONDRIAL"/>
    <property type="match status" value="1"/>
</dbReference>
<dbReference type="PANTHER" id="PTHR43595:SF2">
    <property type="entry name" value="SMALL RIBOSOMAL SUBUNIT PROTEIN MS42"/>
    <property type="match status" value="1"/>
</dbReference>
<dbReference type="Pfam" id="PF02777">
    <property type="entry name" value="Sod_Fe_C"/>
    <property type="match status" value="1"/>
</dbReference>
<dbReference type="Pfam" id="PF00081">
    <property type="entry name" value="Sod_Fe_N"/>
    <property type="match status" value="1"/>
</dbReference>
<dbReference type="PIRSF" id="PIRSF000349">
    <property type="entry name" value="SODismutase"/>
    <property type="match status" value="1"/>
</dbReference>
<dbReference type="PRINTS" id="PR01703">
    <property type="entry name" value="MNSODISMTASE"/>
</dbReference>
<dbReference type="SUPFAM" id="SSF54719">
    <property type="entry name" value="Fe,Mn superoxide dismutase (SOD), C-terminal domain"/>
    <property type="match status" value="1"/>
</dbReference>
<dbReference type="SUPFAM" id="SSF46609">
    <property type="entry name" value="Fe,Mn superoxide dismutase (SOD), N-terminal domain"/>
    <property type="match status" value="1"/>
</dbReference>
<dbReference type="PROSITE" id="PS00088">
    <property type="entry name" value="SOD_MN"/>
    <property type="match status" value="1"/>
</dbReference>
<gene>
    <name type="primary">sodA</name>
    <name type="synonym">sod</name>
    <name type="ordered locus">SAG0788</name>
</gene>
<evidence type="ECO:0000250" key="1"/>
<evidence type="ECO:0000250" key="2">
    <source>
        <dbReference type="UniProtKB" id="P80293"/>
    </source>
</evidence>
<evidence type="ECO:0000305" key="3"/>
<comment type="function">
    <text evidence="2">Destroys superoxide anion radicals which are normally produced within the cells and which are toxic to biological systems. Catalyzes the dismutation of superoxide anion radicals into O2 and H2O2 by successive reduction and oxidation of the transition metal ion at the active site.</text>
</comment>
<comment type="catalytic activity">
    <reaction evidence="2">
        <text>2 superoxide + 2 H(+) = H2O2 + O2</text>
        <dbReference type="Rhea" id="RHEA:20696"/>
        <dbReference type="ChEBI" id="CHEBI:15378"/>
        <dbReference type="ChEBI" id="CHEBI:15379"/>
        <dbReference type="ChEBI" id="CHEBI:16240"/>
        <dbReference type="ChEBI" id="CHEBI:18421"/>
        <dbReference type="EC" id="1.15.1.1"/>
    </reaction>
    <physiologicalReaction direction="left-to-right" evidence="2">
        <dbReference type="Rhea" id="RHEA:20697"/>
    </physiologicalReaction>
</comment>
<comment type="cofactor">
    <cofactor evidence="2">
        <name>Mn(2+)</name>
        <dbReference type="ChEBI" id="CHEBI:29035"/>
    </cofactor>
    <cofactor evidence="2">
        <name>Fe(3+)</name>
        <dbReference type="ChEBI" id="CHEBI:29034"/>
    </cofactor>
    <text evidence="2">Binds 1 Mn(2+) or Fe(3+) ion per subunit.</text>
</comment>
<comment type="similarity">
    <text evidence="3">Belongs to the iron/manganese superoxide dismutase family.</text>
</comment>
<protein>
    <recommendedName>
        <fullName>Superoxide dismutase [Mn/Fe]</fullName>
        <ecNumber evidence="2">1.15.1.1</ecNumber>
    </recommendedName>
</protein>
<sequence>MAIILPDLPYAYDALEPHIDAETMTLHHDKHHATYVANANAALEKHPEIGEDLEALLADVSQIPEDIRQAVINNGGGHLNHALFWELMSPEETQISQELSEDINATFGSFEDFKAAFTAAATGRFGSGWAWLVVNAEGKLEVLSTANQDTPIMEGKKPILGLDVWEHAYYLNYRNVRPNYIKAFFEIINWNKVNELYQAAKA</sequence>
<name>SODM_STRA5</name>
<feature type="initiator methionine" description="Removed" evidence="1">
    <location>
        <position position="1"/>
    </location>
</feature>
<feature type="chain" id="PRO_0000160087" description="Superoxide dismutase [Mn/Fe]">
    <location>
        <begin position="2"/>
        <end position="202"/>
    </location>
</feature>
<feature type="binding site" evidence="2">
    <location>
        <position position="27"/>
    </location>
    <ligand>
        <name>Fe(3+)</name>
        <dbReference type="ChEBI" id="CHEBI:29034"/>
    </ligand>
</feature>
<feature type="binding site" evidence="2">
    <location>
        <position position="27"/>
    </location>
    <ligand>
        <name>Mn(2+)</name>
        <dbReference type="ChEBI" id="CHEBI:29035"/>
    </ligand>
</feature>
<feature type="binding site" evidence="2">
    <location>
        <position position="81"/>
    </location>
    <ligand>
        <name>Fe(3+)</name>
        <dbReference type="ChEBI" id="CHEBI:29034"/>
    </ligand>
</feature>
<feature type="binding site" evidence="2">
    <location>
        <position position="81"/>
    </location>
    <ligand>
        <name>Mn(2+)</name>
        <dbReference type="ChEBI" id="CHEBI:29035"/>
    </ligand>
</feature>
<feature type="binding site" evidence="2">
    <location>
        <position position="163"/>
    </location>
    <ligand>
        <name>Fe(3+)</name>
        <dbReference type="ChEBI" id="CHEBI:29034"/>
    </ligand>
</feature>
<feature type="binding site" evidence="2">
    <location>
        <position position="163"/>
    </location>
    <ligand>
        <name>Mn(2+)</name>
        <dbReference type="ChEBI" id="CHEBI:29035"/>
    </ligand>
</feature>
<feature type="binding site" evidence="2">
    <location>
        <position position="167"/>
    </location>
    <ligand>
        <name>Fe(3+)</name>
        <dbReference type="ChEBI" id="CHEBI:29034"/>
    </ligand>
</feature>
<feature type="binding site" evidence="2">
    <location>
        <position position="167"/>
    </location>
    <ligand>
        <name>Mn(2+)</name>
        <dbReference type="ChEBI" id="CHEBI:29035"/>
    </ligand>
</feature>
<accession>P0A4J4</accession>
<accession>O33604</accession>
<accession>O54086</accession>
<accession>O54091</accession>
<accession>Q59799</accession>